<protein>
    <recommendedName>
        <fullName evidence="1">Gloverin</fullName>
    </recommendedName>
</protein>
<sequence length="36" mass="4044">VFGTLGSTDDSLFGRYKQDIFNDHRGHLQGQAYGSR</sequence>
<keyword id="KW-0044">Antibiotic</keyword>
<keyword id="KW-0929">Antimicrobial</keyword>
<keyword id="KW-0903">Direct protein sequencing</keyword>
<keyword id="KW-0964">Secreted</keyword>
<name>GLOV_HELVI</name>
<proteinExistence type="evidence at protein level"/>
<feature type="chain" id="PRO_0000392510" description="Gloverin">
    <location>
        <begin position="1" status="less than"/>
        <end position="36" status="greater than"/>
    </location>
</feature>
<feature type="non-consecutive residues" evidence="2">
    <location>
        <begin position="15"/>
        <end position="16"/>
    </location>
</feature>
<feature type="non-terminal residue">
    <location>
        <position position="1"/>
    </location>
</feature>
<feature type="non-terminal residue">
    <location>
        <position position="36"/>
    </location>
</feature>
<reference evidence="2" key="1">
    <citation type="submission" date="2009-09" db="UniProtKB">
        <authorList>
            <person name="Shelby K.S."/>
        </authorList>
    </citation>
    <scope>PROTEIN SEQUENCE</scope>
    <source>
        <tissue>Hemolymph</tissue>
    </source>
</reference>
<organism>
    <name type="scientific">Heliothis virescens</name>
    <name type="common">Tobacco budworm moth</name>
    <dbReference type="NCBI Taxonomy" id="7102"/>
    <lineage>
        <taxon>Eukaryota</taxon>
        <taxon>Metazoa</taxon>
        <taxon>Ecdysozoa</taxon>
        <taxon>Arthropoda</taxon>
        <taxon>Hexapoda</taxon>
        <taxon>Insecta</taxon>
        <taxon>Pterygota</taxon>
        <taxon>Neoptera</taxon>
        <taxon>Endopterygota</taxon>
        <taxon>Lepidoptera</taxon>
        <taxon>Glossata</taxon>
        <taxon>Ditrysia</taxon>
        <taxon>Noctuoidea</taxon>
        <taxon>Noctuidae</taxon>
        <taxon>Heliothinae</taxon>
        <taxon>Heliothis</taxon>
    </lineage>
</organism>
<dbReference type="GO" id="GO:0005576">
    <property type="term" value="C:extracellular region"/>
    <property type="evidence" value="ECO:0007669"/>
    <property type="project" value="UniProtKB-SubCell"/>
</dbReference>
<dbReference type="GO" id="GO:0042742">
    <property type="term" value="P:defense response to bacterium"/>
    <property type="evidence" value="ECO:0007669"/>
    <property type="project" value="UniProtKB-KW"/>
</dbReference>
<dbReference type="InterPro" id="IPR019729">
    <property type="entry name" value="Gloverin-like_protein"/>
</dbReference>
<dbReference type="Pfam" id="PF10793">
    <property type="entry name" value="Gloverin"/>
    <property type="match status" value="1"/>
</dbReference>
<comment type="function">
    <text evidence="1">Antibacterial protein.</text>
</comment>
<comment type="subcellular location">
    <subcellularLocation>
        <location evidence="1">Secreted</location>
    </subcellularLocation>
</comment>
<accession>P86358</accession>
<evidence type="ECO:0000250" key="1">
    <source>
        <dbReference type="UniProtKB" id="P81048"/>
    </source>
</evidence>
<evidence type="ECO:0000305" key="2"/>